<reference key="1">
    <citation type="journal article" date="2004" name="Proc. Natl. Acad. Sci. U.S.A.">
        <title>Comparison of the genome of the oral pathogen Treponema denticola with other spirochete genomes.</title>
        <authorList>
            <person name="Seshadri R."/>
            <person name="Myers G.S.A."/>
            <person name="Tettelin H."/>
            <person name="Eisen J.A."/>
            <person name="Heidelberg J.F."/>
            <person name="Dodson R.J."/>
            <person name="Davidsen T.M."/>
            <person name="DeBoy R.T."/>
            <person name="Fouts D.E."/>
            <person name="Haft D.H."/>
            <person name="Selengut J."/>
            <person name="Ren Q."/>
            <person name="Brinkac L.M."/>
            <person name="Madupu R."/>
            <person name="Kolonay J.F."/>
            <person name="Durkin S.A."/>
            <person name="Daugherty S.C."/>
            <person name="Shetty J."/>
            <person name="Shvartsbeyn A."/>
            <person name="Gebregeorgis E."/>
            <person name="Geer K."/>
            <person name="Tsegaye G."/>
            <person name="Malek J.A."/>
            <person name="Ayodeji B."/>
            <person name="Shatsman S."/>
            <person name="McLeod M.P."/>
            <person name="Smajs D."/>
            <person name="Howell J.K."/>
            <person name="Pal S."/>
            <person name="Amin A."/>
            <person name="Vashisth P."/>
            <person name="McNeill T.Z."/>
            <person name="Xiang Q."/>
            <person name="Sodergren E."/>
            <person name="Baca E."/>
            <person name="Weinstock G.M."/>
            <person name="Norris S.J."/>
            <person name="Fraser C.M."/>
            <person name="Paulsen I.T."/>
        </authorList>
    </citation>
    <scope>NUCLEOTIDE SEQUENCE [LARGE SCALE GENOMIC DNA]</scope>
    <source>
        <strain>ATCC 35405 / DSM 14222 / CIP 103919 / JCM 8153 / KCTC 15104</strain>
    </source>
</reference>
<feature type="chain" id="PRO_1000015780" description="Elongation factor Tu">
    <location>
        <begin position="1"/>
        <end position="395"/>
    </location>
</feature>
<feature type="domain" description="tr-type G">
    <location>
        <begin position="10"/>
        <end position="205"/>
    </location>
</feature>
<feature type="region of interest" description="G1" evidence="1">
    <location>
        <begin position="19"/>
        <end position="26"/>
    </location>
</feature>
<feature type="region of interest" description="G2" evidence="1">
    <location>
        <begin position="60"/>
        <end position="64"/>
    </location>
</feature>
<feature type="region of interest" description="G3" evidence="1">
    <location>
        <begin position="81"/>
        <end position="84"/>
    </location>
</feature>
<feature type="region of interest" description="G4" evidence="1">
    <location>
        <begin position="136"/>
        <end position="139"/>
    </location>
</feature>
<feature type="region of interest" description="G5" evidence="1">
    <location>
        <begin position="173"/>
        <end position="175"/>
    </location>
</feature>
<feature type="binding site" evidence="2">
    <location>
        <begin position="19"/>
        <end position="26"/>
    </location>
    <ligand>
        <name>GTP</name>
        <dbReference type="ChEBI" id="CHEBI:37565"/>
    </ligand>
</feature>
<feature type="binding site" evidence="2">
    <location>
        <position position="26"/>
    </location>
    <ligand>
        <name>Mg(2+)</name>
        <dbReference type="ChEBI" id="CHEBI:18420"/>
    </ligand>
</feature>
<feature type="binding site" evidence="2">
    <location>
        <begin position="81"/>
        <end position="85"/>
    </location>
    <ligand>
        <name>GTP</name>
        <dbReference type="ChEBI" id="CHEBI:37565"/>
    </ligand>
</feature>
<feature type="binding site" evidence="2">
    <location>
        <begin position="136"/>
        <end position="139"/>
    </location>
    <ligand>
        <name>GTP</name>
        <dbReference type="ChEBI" id="CHEBI:37565"/>
    </ligand>
</feature>
<protein>
    <recommendedName>
        <fullName evidence="2">Elongation factor Tu</fullName>
        <shortName evidence="2">EF-Tu</shortName>
        <ecNumber evidence="2">3.6.5.3</ecNumber>
    </recommendedName>
</protein>
<proteinExistence type="inferred from homology"/>
<comment type="function">
    <text evidence="2">GTP hydrolase that promotes the GTP-dependent binding of aminoacyl-tRNA to the A-site of ribosomes during protein biosynthesis.</text>
</comment>
<comment type="catalytic activity">
    <reaction evidence="2">
        <text>GTP + H2O = GDP + phosphate + H(+)</text>
        <dbReference type="Rhea" id="RHEA:19669"/>
        <dbReference type="ChEBI" id="CHEBI:15377"/>
        <dbReference type="ChEBI" id="CHEBI:15378"/>
        <dbReference type="ChEBI" id="CHEBI:37565"/>
        <dbReference type="ChEBI" id="CHEBI:43474"/>
        <dbReference type="ChEBI" id="CHEBI:58189"/>
        <dbReference type="EC" id="3.6.5.3"/>
    </reaction>
    <physiologicalReaction direction="left-to-right" evidence="2">
        <dbReference type="Rhea" id="RHEA:19670"/>
    </physiologicalReaction>
</comment>
<comment type="subunit">
    <text evidence="2">Monomer.</text>
</comment>
<comment type="subcellular location">
    <subcellularLocation>
        <location evidence="2">Cytoplasm</location>
    </subcellularLocation>
</comment>
<comment type="similarity">
    <text evidence="2">Belongs to the TRAFAC class translation factor GTPase superfamily. Classic translation factor GTPase family. EF-Tu/EF-1A subfamily.</text>
</comment>
<sequence>MAKEKFNRTKVHMNVGTIGHVDHGKTTLSAAITTYCAKKYGDKLLKYDEIDNAPEEKERGITINTRHLEYQSDKRHYAHIDCPGHADYVKNMITGAAQMDGAILVVSAPDSVMPQTKEHLLLARQVGVPSIIVFLNKVDLVDDPELVELVEEEVRETLTSYGFPEDTPIIKGSAFKALQEGATAEDTACIEELLKTMDEYFKDPVRDSDKPFLLPIEDIFTIQGRGTVVTGRIERGVIKMNEEVEIVGIKPTKKTVVTGIEMFNKLLDEGEAGDNVGLLLRGIEKKEVERGQVLAKPGSIHPHTKFEAQIYVLSKEEGGRHSPFFSGYRPQFYFRTTDITGTVNLPEGTDMVKPGDNTKIIGELIHPIAMDQGLKLAIREGGRTIASGQVTNIIE</sequence>
<keyword id="KW-0963">Cytoplasm</keyword>
<keyword id="KW-0251">Elongation factor</keyword>
<keyword id="KW-0342">GTP-binding</keyword>
<keyword id="KW-0378">Hydrolase</keyword>
<keyword id="KW-0460">Magnesium</keyword>
<keyword id="KW-0479">Metal-binding</keyword>
<keyword id="KW-0547">Nucleotide-binding</keyword>
<keyword id="KW-0648">Protein biosynthesis</keyword>
<keyword id="KW-1185">Reference proteome</keyword>
<name>EFTU_TREDE</name>
<accession>Q73PN3</accession>
<dbReference type="EC" id="3.6.5.3" evidence="2"/>
<dbReference type="EMBL" id="AE017226">
    <property type="protein sequence ID" value="AAS11256.1"/>
    <property type="molecule type" value="Genomic_DNA"/>
</dbReference>
<dbReference type="RefSeq" id="NP_971375.1">
    <property type="nucleotide sequence ID" value="NC_002967.9"/>
</dbReference>
<dbReference type="RefSeq" id="WP_002669993.1">
    <property type="nucleotide sequence ID" value="NC_002967.9"/>
</dbReference>
<dbReference type="SMR" id="Q73PN3"/>
<dbReference type="STRING" id="243275.TDE_0765"/>
<dbReference type="PaxDb" id="243275-TDE_0765"/>
<dbReference type="GeneID" id="2740305"/>
<dbReference type="KEGG" id="tde:TDE_0765"/>
<dbReference type="PATRIC" id="fig|243275.7.peg.738"/>
<dbReference type="eggNOG" id="COG0050">
    <property type="taxonomic scope" value="Bacteria"/>
</dbReference>
<dbReference type="HOGENOM" id="CLU_007265_0_1_12"/>
<dbReference type="OrthoDB" id="9804504at2"/>
<dbReference type="Proteomes" id="UP000008212">
    <property type="component" value="Chromosome"/>
</dbReference>
<dbReference type="GO" id="GO:0005737">
    <property type="term" value="C:cytoplasm"/>
    <property type="evidence" value="ECO:0007669"/>
    <property type="project" value="UniProtKB-SubCell"/>
</dbReference>
<dbReference type="GO" id="GO:0005525">
    <property type="term" value="F:GTP binding"/>
    <property type="evidence" value="ECO:0007669"/>
    <property type="project" value="UniProtKB-UniRule"/>
</dbReference>
<dbReference type="GO" id="GO:0003924">
    <property type="term" value="F:GTPase activity"/>
    <property type="evidence" value="ECO:0007669"/>
    <property type="project" value="InterPro"/>
</dbReference>
<dbReference type="GO" id="GO:0003746">
    <property type="term" value="F:translation elongation factor activity"/>
    <property type="evidence" value="ECO:0007669"/>
    <property type="project" value="UniProtKB-UniRule"/>
</dbReference>
<dbReference type="CDD" id="cd01884">
    <property type="entry name" value="EF_Tu"/>
    <property type="match status" value="1"/>
</dbReference>
<dbReference type="CDD" id="cd03697">
    <property type="entry name" value="EFTU_II"/>
    <property type="match status" value="1"/>
</dbReference>
<dbReference type="CDD" id="cd03707">
    <property type="entry name" value="EFTU_III"/>
    <property type="match status" value="1"/>
</dbReference>
<dbReference type="FunFam" id="2.40.30.10:FF:000001">
    <property type="entry name" value="Elongation factor Tu"/>
    <property type="match status" value="1"/>
</dbReference>
<dbReference type="FunFam" id="3.40.50.300:FF:000003">
    <property type="entry name" value="Elongation factor Tu"/>
    <property type="match status" value="1"/>
</dbReference>
<dbReference type="Gene3D" id="3.40.50.300">
    <property type="entry name" value="P-loop containing nucleotide triphosphate hydrolases"/>
    <property type="match status" value="1"/>
</dbReference>
<dbReference type="Gene3D" id="2.40.30.10">
    <property type="entry name" value="Translation factors"/>
    <property type="match status" value="2"/>
</dbReference>
<dbReference type="HAMAP" id="MF_00118_B">
    <property type="entry name" value="EF_Tu_B"/>
    <property type="match status" value="1"/>
</dbReference>
<dbReference type="InterPro" id="IPR041709">
    <property type="entry name" value="EF-Tu_GTP-bd"/>
</dbReference>
<dbReference type="InterPro" id="IPR050055">
    <property type="entry name" value="EF-Tu_GTPase"/>
</dbReference>
<dbReference type="InterPro" id="IPR004161">
    <property type="entry name" value="EFTu-like_2"/>
</dbReference>
<dbReference type="InterPro" id="IPR033720">
    <property type="entry name" value="EFTU_2"/>
</dbReference>
<dbReference type="InterPro" id="IPR031157">
    <property type="entry name" value="G_TR_CS"/>
</dbReference>
<dbReference type="InterPro" id="IPR027417">
    <property type="entry name" value="P-loop_NTPase"/>
</dbReference>
<dbReference type="InterPro" id="IPR005225">
    <property type="entry name" value="Small_GTP-bd"/>
</dbReference>
<dbReference type="InterPro" id="IPR000795">
    <property type="entry name" value="T_Tr_GTP-bd_dom"/>
</dbReference>
<dbReference type="InterPro" id="IPR009000">
    <property type="entry name" value="Transl_B-barrel_sf"/>
</dbReference>
<dbReference type="InterPro" id="IPR009001">
    <property type="entry name" value="Transl_elong_EF1A/Init_IF2_C"/>
</dbReference>
<dbReference type="InterPro" id="IPR004541">
    <property type="entry name" value="Transl_elong_EFTu/EF1A_bac/org"/>
</dbReference>
<dbReference type="InterPro" id="IPR004160">
    <property type="entry name" value="Transl_elong_EFTu/EF1A_C"/>
</dbReference>
<dbReference type="NCBIfam" id="TIGR00485">
    <property type="entry name" value="EF-Tu"/>
    <property type="match status" value="1"/>
</dbReference>
<dbReference type="NCBIfam" id="NF000766">
    <property type="entry name" value="PRK00049.1"/>
    <property type="match status" value="1"/>
</dbReference>
<dbReference type="NCBIfam" id="NF009372">
    <property type="entry name" value="PRK12735.1"/>
    <property type="match status" value="1"/>
</dbReference>
<dbReference type="NCBIfam" id="NF009373">
    <property type="entry name" value="PRK12736.1"/>
    <property type="match status" value="1"/>
</dbReference>
<dbReference type="NCBIfam" id="TIGR00231">
    <property type="entry name" value="small_GTP"/>
    <property type="match status" value="1"/>
</dbReference>
<dbReference type="PANTHER" id="PTHR43721:SF22">
    <property type="entry name" value="ELONGATION FACTOR TU, MITOCHONDRIAL"/>
    <property type="match status" value="1"/>
</dbReference>
<dbReference type="PANTHER" id="PTHR43721">
    <property type="entry name" value="ELONGATION FACTOR TU-RELATED"/>
    <property type="match status" value="1"/>
</dbReference>
<dbReference type="Pfam" id="PF00009">
    <property type="entry name" value="GTP_EFTU"/>
    <property type="match status" value="1"/>
</dbReference>
<dbReference type="Pfam" id="PF03144">
    <property type="entry name" value="GTP_EFTU_D2"/>
    <property type="match status" value="1"/>
</dbReference>
<dbReference type="Pfam" id="PF03143">
    <property type="entry name" value="GTP_EFTU_D3"/>
    <property type="match status" value="1"/>
</dbReference>
<dbReference type="PRINTS" id="PR00315">
    <property type="entry name" value="ELONGATNFCT"/>
</dbReference>
<dbReference type="SUPFAM" id="SSF50465">
    <property type="entry name" value="EF-Tu/eEF-1alpha/eIF2-gamma C-terminal domain"/>
    <property type="match status" value="1"/>
</dbReference>
<dbReference type="SUPFAM" id="SSF52540">
    <property type="entry name" value="P-loop containing nucleoside triphosphate hydrolases"/>
    <property type="match status" value="1"/>
</dbReference>
<dbReference type="SUPFAM" id="SSF50447">
    <property type="entry name" value="Translation proteins"/>
    <property type="match status" value="1"/>
</dbReference>
<dbReference type="PROSITE" id="PS00301">
    <property type="entry name" value="G_TR_1"/>
    <property type="match status" value="1"/>
</dbReference>
<dbReference type="PROSITE" id="PS51722">
    <property type="entry name" value="G_TR_2"/>
    <property type="match status" value="1"/>
</dbReference>
<organism>
    <name type="scientific">Treponema denticola (strain ATCC 35405 / DSM 14222 / CIP 103919 / JCM 8153 / KCTC 15104)</name>
    <dbReference type="NCBI Taxonomy" id="243275"/>
    <lineage>
        <taxon>Bacteria</taxon>
        <taxon>Pseudomonadati</taxon>
        <taxon>Spirochaetota</taxon>
        <taxon>Spirochaetia</taxon>
        <taxon>Spirochaetales</taxon>
        <taxon>Treponemataceae</taxon>
        <taxon>Treponema</taxon>
    </lineage>
</organism>
<gene>
    <name evidence="2" type="primary">tuf</name>
    <name type="ordered locus">TDE_0765</name>
</gene>
<evidence type="ECO:0000250" key="1"/>
<evidence type="ECO:0000255" key="2">
    <source>
        <dbReference type="HAMAP-Rule" id="MF_00118"/>
    </source>
</evidence>